<evidence type="ECO:0000250" key="1"/>
<evidence type="ECO:0000305" key="2"/>
<reference key="1">
    <citation type="journal article" date="2006" name="Theor. Appl. Genet.">
        <title>Complete chloroplast genome sequences of Solanum bulbocastanum, Solanum lycopersicum and comparative analyses with other Solanaceae genomes.</title>
        <authorList>
            <person name="Daniell H."/>
            <person name="Lee S.-B."/>
            <person name="Grevich J."/>
            <person name="Saski C."/>
            <person name="Quesada-Vargas T."/>
            <person name="Guda C."/>
            <person name="Tomkins J."/>
            <person name="Jansen R.K."/>
        </authorList>
    </citation>
    <scope>NUCLEOTIDE SEQUENCE [LARGE SCALE GENOMIC DNA]</scope>
    <source>
        <strain>cv. LA3023</strain>
    </source>
</reference>
<reference key="2">
    <citation type="journal article" date="2006" name="J. Mol. Evol.">
        <title>Sequence of the tomato chloroplast DNA and evolutionary comparison of solanaceous plastid genomes.</title>
        <authorList>
            <person name="Kahlau S."/>
            <person name="Aspinall S."/>
            <person name="Gray J.C."/>
            <person name="Bock R."/>
        </authorList>
    </citation>
    <scope>NUCLEOTIDE SEQUENCE [LARGE SCALE GENOMIC DNA]</scope>
    <source>
        <strain>cv. IPA-6</strain>
    </source>
</reference>
<sequence>MDGIKYAVFTDKSIRLLGKNQYTSNVESGSTRTEIKHWVELFFGVKVIAMNSHRLPGKSRRMGPIMGHTMHYRRMIITLQPGYSIPPLRKKRT</sequence>
<feature type="chain" id="PRO_0000272933" description="Large ribosomal subunit protein uL23cz/uL23cy">
    <location>
        <begin position="1"/>
        <end position="93"/>
    </location>
</feature>
<protein>
    <recommendedName>
        <fullName evidence="2">Large ribosomal subunit protein uL23cz/uL23cy</fullName>
    </recommendedName>
    <alternativeName>
        <fullName>50S ribosomal protein L23, chloroplastic</fullName>
    </alternativeName>
</protein>
<comment type="function">
    <text evidence="1">Binds to 23S rRNA.</text>
</comment>
<comment type="subunit">
    <text evidence="1">Part of the 50S ribosomal subunit.</text>
</comment>
<comment type="subcellular location">
    <subcellularLocation>
        <location>Plastid</location>
        <location>Chloroplast</location>
    </subcellularLocation>
</comment>
<comment type="similarity">
    <text evidence="2">Belongs to the universal ribosomal protein uL23 family.</text>
</comment>
<organism>
    <name type="scientific">Solanum lycopersicum</name>
    <name type="common">Tomato</name>
    <name type="synonym">Lycopersicon esculentum</name>
    <dbReference type="NCBI Taxonomy" id="4081"/>
    <lineage>
        <taxon>Eukaryota</taxon>
        <taxon>Viridiplantae</taxon>
        <taxon>Streptophyta</taxon>
        <taxon>Embryophyta</taxon>
        <taxon>Tracheophyta</taxon>
        <taxon>Spermatophyta</taxon>
        <taxon>Magnoliopsida</taxon>
        <taxon>eudicotyledons</taxon>
        <taxon>Gunneridae</taxon>
        <taxon>Pentapetalae</taxon>
        <taxon>asterids</taxon>
        <taxon>lamiids</taxon>
        <taxon>Solanales</taxon>
        <taxon>Solanaceae</taxon>
        <taxon>Solanoideae</taxon>
        <taxon>Solaneae</taxon>
        <taxon>Solanum</taxon>
        <taxon>Solanum subgen. Lycopersicon</taxon>
    </lineage>
</organism>
<accession>Q2MI58</accession>
<gene>
    <name type="primary">rpl23-A</name>
</gene>
<gene>
    <name type="primary">rpl23-B</name>
</gene>
<name>RK23_SOLLC</name>
<dbReference type="EMBL" id="DQ347959">
    <property type="protein sequence ID" value="ABC56342.1"/>
    <property type="molecule type" value="Genomic_DNA"/>
</dbReference>
<dbReference type="EMBL" id="DQ347959">
    <property type="protein sequence ID" value="ABC56365.1"/>
    <property type="molecule type" value="Genomic_DNA"/>
</dbReference>
<dbReference type="EMBL" id="AM087200">
    <property type="protein sequence ID" value="CAJ32436.1"/>
    <property type="molecule type" value="Genomic_DNA"/>
</dbReference>
<dbReference type="EMBL" id="AM087200">
    <property type="protein sequence ID" value="CAJ32458.1"/>
    <property type="molecule type" value="Genomic_DNA"/>
</dbReference>
<dbReference type="RefSeq" id="AP_004970.1">
    <property type="nucleotide sequence ID" value="AC_000188.1"/>
</dbReference>
<dbReference type="RefSeq" id="AP_004992.1">
    <property type="nucleotide sequence ID" value="AC_000188.1"/>
</dbReference>
<dbReference type="SMR" id="Q2MI58"/>
<dbReference type="FunCoup" id="Q2MI58">
    <property type="interactions" value="82"/>
</dbReference>
<dbReference type="STRING" id="4081.Q2MI58"/>
<dbReference type="KEGG" id="sly:16976779"/>
<dbReference type="KEGG" id="sly:3950471"/>
<dbReference type="eggNOG" id="ENOG502SAK4">
    <property type="taxonomic scope" value="Eukaryota"/>
</dbReference>
<dbReference type="InParanoid" id="Q2MI58"/>
<dbReference type="OrthoDB" id="1245557at2759"/>
<dbReference type="Proteomes" id="UP000004994">
    <property type="component" value="Chloroplast"/>
</dbReference>
<dbReference type="ExpressionAtlas" id="Q2MI58">
    <property type="expression patterns" value="baseline"/>
</dbReference>
<dbReference type="GO" id="GO:0009507">
    <property type="term" value="C:chloroplast"/>
    <property type="evidence" value="ECO:0007669"/>
    <property type="project" value="UniProtKB-SubCell"/>
</dbReference>
<dbReference type="GO" id="GO:0022625">
    <property type="term" value="C:cytosolic large ribosomal subunit"/>
    <property type="evidence" value="ECO:0000318"/>
    <property type="project" value="GO_Central"/>
</dbReference>
<dbReference type="GO" id="GO:0003729">
    <property type="term" value="F:mRNA binding"/>
    <property type="evidence" value="ECO:0007669"/>
    <property type="project" value="UniProtKB-ARBA"/>
</dbReference>
<dbReference type="GO" id="GO:0019843">
    <property type="term" value="F:rRNA binding"/>
    <property type="evidence" value="ECO:0007669"/>
    <property type="project" value="UniProtKB-UniRule"/>
</dbReference>
<dbReference type="GO" id="GO:0003735">
    <property type="term" value="F:structural constituent of ribosome"/>
    <property type="evidence" value="ECO:0000318"/>
    <property type="project" value="GO_Central"/>
</dbReference>
<dbReference type="GO" id="GO:0006412">
    <property type="term" value="P:translation"/>
    <property type="evidence" value="ECO:0007669"/>
    <property type="project" value="UniProtKB-UniRule"/>
</dbReference>
<dbReference type="FunFam" id="3.30.70.330:FF:000002">
    <property type="entry name" value="50S ribosomal protein L23, chloroplastic"/>
    <property type="match status" value="1"/>
</dbReference>
<dbReference type="Gene3D" id="3.30.70.330">
    <property type="match status" value="1"/>
</dbReference>
<dbReference type="HAMAP" id="MF_01369_B">
    <property type="entry name" value="Ribosomal_uL23_B"/>
    <property type="match status" value="1"/>
</dbReference>
<dbReference type="InterPro" id="IPR012677">
    <property type="entry name" value="Nucleotide-bd_a/b_plait_sf"/>
</dbReference>
<dbReference type="InterPro" id="IPR013025">
    <property type="entry name" value="Ribosomal_uL23-like"/>
</dbReference>
<dbReference type="InterPro" id="IPR012678">
    <property type="entry name" value="Ribosomal_uL23/eL15/eS24_sf"/>
</dbReference>
<dbReference type="InterPro" id="IPR001014">
    <property type="entry name" value="Ribosomal_uL23_CS"/>
</dbReference>
<dbReference type="PANTHER" id="PTHR11620">
    <property type="entry name" value="60S RIBOSOMAL PROTEIN L23A"/>
    <property type="match status" value="1"/>
</dbReference>
<dbReference type="Pfam" id="PF00276">
    <property type="entry name" value="Ribosomal_L23"/>
    <property type="match status" value="1"/>
</dbReference>
<dbReference type="SUPFAM" id="SSF54189">
    <property type="entry name" value="Ribosomal proteins S24e, L23 and L15e"/>
    <property type="match status" value="1"/>
</dbReference>
<dbReference type="PROSITE" id="PS00050">
    <property type="entry name" value="RIBOSOMAL_L23"/>
    <property type="match status" value="1"/>
</dbReference>
<proteinExistence type="inferred from homology"/>
<geneLocation type="chloroplast"/>
<keyword id="KW-0150">Chloroplast</keyword>
<keyword id="KW-0934">Plastid</keyword>
<keyword id="KW-1185">Reference proteome</keyword>
<keyword id="KW-0687">Ribonucleoprotein</keyword>
<keyword id="KW-0689">Ribosomal protein</keyword>
<keyword id="KW-0694">RNA-binding</keyword>
<keyword id="KW-0699">rRNA-binding</keyword>